<organism>
    <name type="scientific">Blochmanniella floridana</name>
    <dbReference type="NCBI Taxonomy" id="203907"/>
    <lineage>
        <taxon>Bacteria</taxon>
        <taxon>Pseudomonadati</taxon>
        <taxon>Pseudomonadota</taxon>
        <taxon>Gammaproteobacteria</taxon>
        <taxon>Enterobacterales</taxon>
        <taxon>Enterobacteriaceae</taxon>
        <taxon>ant endosymbionts</taxon>
        <taxon>Candidatus Blochmanniella</taxon>
    </lineage>
</organism>
<reference key="1">
    <citation type="journal article" date="2003" name="Proc. Natl. Acad. Sci. U.S.A.">
        <title>The genome sequence of Blochmannia floridanus: comparative analysis of reduced genomes.</title>
        <authorList>
            <person name="Gil R."/>
            <person name="Silva F.J."/>
            <person name="Zientz E."/>
            <person name="Delmotte F."/>
            <person name="Gonzalez-Candelas F."/>
            <person name="Latorre A."/>
            <person name="Rausell C."/>
            <person name="Kamerbeek J."/>
            <person name="Gadau J."/>
            <person name="Hoelldobler B."/>
            <person name="van Ham R.C.H.J."/>
            <person name="Gross R."/>
            <person name="Moya A."/>
        </authorList>
    </citation>
    <scope>NUCLEOTIDE SEQUENCE [LARGE SCALE GENOMIC DNA]</scope>
</reference>
<accession>Q7VRE8</accession>
<proteinExistence type="inferred from homology"/>
<name>DAPD_BLOFL</name>
<evidence type="ECO:0000255" key="1">
    <source>
        <dbReference type="HAMAP-Rule" id="MF_00811"/>
    </source>
</evidence>
<keyword id="KW-0012">Acyltransferase</keyword>
<keyword id="KW-0028">Amino-acid biosynthesis</keyword>
<keyword id="KW-0963">Cytoplasm</keyword>
<keyword id="KW-0220">Diaminopimelate biosynthesis</keyword>
<keyword id="KW-0457">Lysine biosynthesis</keyword>
<keyword id="KW-1185">Reference proteome</keyword>
<keyword id="KW-0677">Repeat</keyword>
<keyword id="KW-0808">Transferase</keyword>
<comment type="catalytic activity">
    <reaction evidence="1">
        <text>(S)-2,3,4,5-tetrahydrodipicolinate + succinyl-CoA + H2O = (S)-2-succinylamino-6-oxoheptanedioate + CoA</text>
        <dbReference type="Rhea" id="RHEA:17325"/>
        <dbReference type="ChEBI" id="CHEBI:15377"/>
        <dbReference type="ChEBI" id="CHEBI:15685"/>
        <dbReference type="ChEBI" id="CHEBI:16845"/>
        <dbReference type="ChEBI" id="CHEBI:57287"/>
        <dbReference type="ChEBI" id="CHEBI:57292"/>
        <dbReference type="EC" id="2.3.1.117"/>
    </reaction>
</comment>
<comment type="pathway">
    <text evidence="1">Amino-acid biosynthesis; L-lysine biosynthesis via DAP pathway; LL-2,6-diaminopimelate from (S)-tetrahydrodipicolinate (succinylase route): step 1/3.</text>
</comment>
<comment type="subunit">
    <text evidence="1">Homotrimer.</text>
</comment>
<comment type="subcellular location">
    <subcellularLocation>
        <location evidence="1">Cytoplasm</location>
    </subcellularLocation>
</comment>
<comment type="similarity">
    <text evidence="1">Belongs to the transferase hexapeptide repeat family.</text>
</comment>
<sequence length="280" mass="31433">MNENNIQKLQKIIEHYFIKQQNISKNNIDLNLRNTVQEVIDNLNNGILRVSEKINNKWITHQWIKKAIILFFTITNNKLMTWGNARFFDKCPTKFENKSEEYFKNRKIRIIPPATVRYGAYIANNTVIMPSYVNIGAYIDTGTMIDTWATIGSCAHIGKNTHISGGVGIGGVLEPIQANPTIIEDNCFIGARSEIAEGVIIEENSVLAMGVFISQSTKIYNRSTGHVHYGYVPSGSVVIPGSLPSEDGKSSTYCAIIVKTVDSRTKNKIQINNLLREYCN</sequence>
<protein>
    <recommendedName>
        <fullName evidence="1">2,3,4,5-tetrahydropyridine-2,6-dicarboxylate N-succinyltransferase</fullName>
        <ecNumber evidence="1">2.3.1.117</ecNumber>
    </recommendedName>
    <alternativeName>
        <fullName evidence="1">Tetrahydrodipicolinate N-succinyltransferase</fullName>
        <shortName evidence="1">THDP succinyltransferase</shortName>
        <shortName evidence="1">THP succinyltransferase</shortName>
        <shortName evidence="1">Tetrahydropicolinate succinylase</shortName>
    </alternativeName>
</protein>
<dbReference type="EC" id="2.3.1.117" evidence="1"/>
<dbReference type="EMBL" id="BX248583">
    <property type="protein sequence ID" value="CAD83340.1"/>
    <property type="molecule type" value="Genomic_DNA"/>
</dbReference>
<dbReference type="SMR" id="Q7VRE8"/>
<dbReference type="STRING" id="203907.Bfl269"/>
<dbReference type="KEGG" id="bfl:Bfl269"/>
<dbReference type="eggNOG" id="COG2171">
    <property type="taxonomic scope" value="Bacteria"/>
</dbReference>
<dbReference type="HOGENOM" id="CLU_050859_0_1_6"/>
<dbReference type="UniPathway" id="UPA00034">
    <property type="reaction ID" value="UER00019"/>
</dbReference>
<dbReference type="Proteomes" id="UP000002192">
    <property type="component" value="Chromosome"/>
</dbReference>
<dbReference type="GO" id="GO:0005737">
    <property type="term" value="C:cytoplasm"/>
    <property type="evidence" value="ECO:0007669"/>
    <property type="project" value="UniProtKB-SubCell"/>
</dbReference>
<dbReference type="GO" id="GO:0008666">
    <property type="term" value="F:2,3,4,5-tetrahydropyridine-2,6-dicarboxylate N-succinyltransferase activity"/>
    <property type="evidence" value="ECO:0007669"/>
    <property type="project" value="UniProtKB-UniRule"/>
</dbReference>
<dbReference type="GO" id="GO:0016779">
    <property type="term" value="F:nucleotidyltransferase activity"/>
    <property type="evidence" value="ECO:0007669"/>
    <property type="project" value="TreeGrafter"/>
</dbReference>
<dbReference type="GO" id="GO:0019877">
    <property type="term" value="P:diaminopimelate biosynthetic process"/>
    <property type="evidence" value="ECO:0007669"/>
    <property type="project" value="UniProtKB-UniRule"/>
</dbReference>
<dbReference type="GO" id="GO:0009089">
    <property type="term" value="P:lysine biosynthetic process via diaminopimelate"/>
    <property type="evidence" value="ECO:0007669"/>
    <property type="project" value="UniProtKB-UniRule"/>
</dbReference>
<dbReference type="CDD" id="cd03350">
    <property type="entry name" value="LbH_THP_succinylT"/>
    <property type="match status" value="1"/>
</dbReference>
<dbReference type="Gene3D" id="2.160.10.10">
    <property type="entry name" value="Hexapeptide repeat proteins"/>
    <property type="match status" value="1"/>
</dbReference>
<dbReference type="Gene3D" id="1.10.166.10">
    <property type="entry name" value="Tetrahydrodipicolinate-N-succinyltransferase, N-terminal domain"/>
    <property type="match status" value="1"/>
</dbReference>
<dbReference type="HAMAP" id="MF_00811">
    <property type="entry name" value="DapD"/>
    <property type="match status" value="1"/>
</dbReference>
<dbReference type="InterPro" id="IPR005664">
    <property type="entry name" value="DapD_Trfase_Hexpep_rpt_fam"/>
</dbReference>
<dbReference type="InterPro" id="IPR001451">
    <property type="entry name" value="Hexapep"/>
</dbReference>
<dbReference type="InterPro" id="IPR018357">
    <property type="entry name" value="Hexapep_transf_CS"/>
</dbReference>
<dbReference type="InterPro" id="IPR023180">
    <property type="entry name" value="THP_succinylTrfase_dom1"/>
</dbReference>
<dbReference type="InterPro" id="IPR037133">
    <property type="entry name" value="THP_succinylTrfase_N_sf"/>
</dbReference>
<dbReference type="InterPro" id="IPR011004">
    <property type="entry name" value="Trimer_LpxA-like_sf"/>
</dbReference>
<dbReference type="NCBIfam" id="TIGR00965">
    <property type="entry name" value="dapD"/>
    <property type="match status" value="1"/>
</dbReference>
<dbReference type="NCBIfam" id="NF008808">
    <property type="entry name" value="PRK11830.1"/>
    <property type="match status" value="1"/>
</dbReference>
<dbReference type="PANTHER" id="PTHR19136:SF52">
    <property type="entry name" value="2,3,4,5-TETRAHYDROPYRIDINE-2,6-DICARBOXYLATE N-SUCCINYLTRANSFERASE"/>
    <property type="match status" value="1"/>
</dbReference>
<dbReference type="PANTHER" id="PTHR19136">
    <property type="entry name" value="MOLYBDENUM COFACTOR GUANYLYLTRANSFERASE"/>
    <property type="match status" value="1"/>
</dbReference>
<dbReference type="Pfam" id="PF14602">
    <property type="entry name" value="Hexapep_2"/>
    <property type="match status" value="1"/>
</dbReference>
<dbReference type="Pfam" id="PF14805">
    <property type="entry name" value="THDPS_N_2"/>
    <property type="match status" value="1"/>
</dbReference>
<dbReference type="SUPFAM" id="SSF51161">
    <property type="entry name" value="Trimeric LpxA-like enzymes"/>
    <property type="match status" value="1"/>
</dbReference>
<dbReference type="PROSITE" id="PS00101">
    <property type="entry name" value="HEXAPEP_TRANSFERASES"/>
    <property type="match status" value="1"/>
</dbReference>
<feature type="chain" id="PRO_0000196928" description="2,3,4,5-tetrahydropyridine-2,6-dicarboxylate N-succinyltransferase">
    <location>
        <begin position="1"/>
        <end position="280"/>
    </location>
</feature>
<feature type="binding site" evidence="1">
    <location>
        <position position="109"/>
    </location>
    <ligand>
        <name>substrate</name>
    </ligand>
</feature>
<feature type="binding site" evidence="1">
    <location>
        <position position="146"/>
    </location>
    <ligand>
        <name>substrate</name>
    </ligand>
</feature>
<gene>
    <name evidence="1" type="primary">dapD</name>
    <name type="ordered locus">Bfl269</name>
</gene>